<organism>
    <name type="scientific">Pseudomonas putida (strain W619)</name>
    <dbReference type="NCBI Taxonomy" id="390235"/>
    <lineage>
        <taxon>Bacteria</taxon>
        <taxon>Pseudomonadati</taxon>
        <taxon>Pseudomonadota</taxon>
        <taxon>Gammaproteobacteria</taxon>
        <taxon>Pseudomonadales</taxon>
        <taxon>Pseudomonadaceae</taxon>
        <taxon>Pseudomonas</taxon>
    </lineage>
</organism>
<proteinExistence type="inferred from homology"/>
<accession>B1JB30</accession>
<dbReference type="EC" id="3.1.3.5" evidence="1"/>
<dbReference type="EMBL" id="CP000949">
    <property type="protein sequence ID" value="ACA74535.1"/>
    <property type="molecule type" value="Genomic_DNA"/>
</dbReference>
<dbReference type="SMR" id="B1JB30"/>
<dbReference type="STRING" id="390235.PputW619_4055"/>
<dbReference type="KEGG" id="ppw:PputW619_4055"/>
<dbReference type="eggNOG" id="COG0496">
    <property type="taxonomic scope" value="Bacteria"/>
</dbReference>
<dbReference type="HOGENOM" id="CLU_045192_1_2_6"/>
<dbReference type="OrthoDB" id="9780815at2"/>
<dbReference type="GO" id="GO:0005737">
    <property type="term" value="C:cytoplasm"/>
    <property type="evidence" value="ECO:0007669"/>
    <property type="project" value="UniProtKB-SubCell"/>
</dbReference>
<dbReference type="GO" id="GO:0008254">
    <property type="term" value="F:3'-nucleotidase activity"/>
    <property type="evidence" value="ECO:0007669"/>
    <property type="project" value="TreeGrafter"/>
</dbReference>
<dbReference type="GO" id="GO:0008253">
    <property type="term" value="F:5'-nucleotidase activity"/>
    <property type="evidence" value="ECO:0007669"/>
    <property type="project" value="UniProtKB-UniRule"/>
</dbReference>
<dbReference type="GO" id="GO:0004309">
    <property type="term" value="F:exopolyphosphatase activity"/>
    <property type="evidence" value="ECO:0007669"/>
    <property type="project" value="TreeGrafter"/>
</dbReference>
<dbReference type="GO" id="GO:0046872">
    <property type="term" value="F:metal ion binding"/>
    <property type="evidence" value="ECO:0007669"/>
    <property type="project" value="UniProtKB-UniRule"/>
</dbReference>
<dbReference type="GO" id="GO:0000166">
    <property type="term" value="F:nucleotide binding"/>
    <property type="evidence" value="ECO:0007669"/>
    <property type="project" value="UniProtKB-KW"/>
</dbReference>
<dbReference type="FunFam" id="3.40.1210.10:FF:000001">
    <property type="entry name" value="5'/3'-nucleotidase SurE"/>
    <property type="match status" value="1"/>
</dbReference>
<dbReference type="Gene3D" id="3.40.1210.10">
    <property type="entry name" value="Survival protein SurE-like phosphatase/nucleotidase"/>
    <property type="match status" value="1"/>
</dbReference>
<dbReference type="HAMAP" id="MF_00060">
    <property type="entry name" value="SurE"/>
    <property type="match status" value="1"/>
</dbReference>
<dbReference type="InterPro" id="IPR030048">
    <property type="entry name" value="SurE"/>
</dbReference>
<dbReference type="InterPro" id="IPR002828">
    <property type="entry name" value="SurE-like_Pase/nucleotidase"/>
</dbReference>
<dbReference type="InterPro" id="IPR036523">
    <property type="entry name" value="SurE-like_sf"/>
</dbReference>
<dbReference type="NCBIfam" id="NF001489">
    <property type="entry name" value="PRK00346.1-3"/>
    <property type="match status" value="1"/>
</dbReference>
<dbReference type="NCBIfam" id="NF001490">
    <property type="entry name" value="PRK00346.1-4"/>
    <property type="match status" value="1"/>
</dbReference>
<dbReference type="NCBIfam" id="TIGR00087">
    <property type="entry name" value="surE"/>
    <property type="match status" value="1"/>
</dbReference>
<dbReference type="PANTHER" id="PTHR30457">
    <property type="entry name" value="5'-NUCLEOTIDASE SURE"/>
    <property type="match status" value="1"/>
</dbReference>
<dbReference type="PANTHER" id="PTHR30457:SF12">
    <property type="entry name" value="5'_3'-NUCLEOTIDASE SURE"/>
    <property type="match status" value="1"/>
</dbReference>
<dbReference type="Pfam" id="PF01975">
    <property type="entry name" value="SurE"/>
    <property type="match status" value="1"/>
</dbReference>
<dbReference type="SUPFAM" id="SSF64167">
    <property type="entry name" value="SurE-like"/>
    <property type="match status" value="1"/>
</dbReference>
<feature type="chain" id="PRO_1000092027" description="5'-nucleotidase SurE">
    <location>
        <begin position="1"/>
        <end position="249"/>
    </location>
</feature>
<feature type="binding site" evidence="1">
    <location>
        <position position="8"/>
    </location>
    <ligand>
        <name>a divalent metal cation</name>
        <dbReference type="ChEBI" id="CHEBI:60240"/>
    </ligand>
</feature>
<feature type="binding site" evidence="1">
    <location>
        <position position="9"/>
    </location>
    <ligand>
        <name>a divalent metal cation</name>
        <dbReference type="ChEBI" id="CHEBI:60240"/>
    </ligand>
</feature>
<feature type="binding site" evidence="1">
    <location>
        <position position="39"/>
    </location>
    <ligand>
        <name>a divalent metal cation</name>
        <dbReference type="ChEBI" id="CHEBI:60240"/>
    </ligand>
</feature>
<feature type="binding site" evidence="1">
    <location>
        <position position="91"/>
    </location>
    <ligand>
        <name>a divalent metal cation</name>
        <dbReference type="ChEBI" id="CHEBI:60240"/>
    </ligand>
</feature>
<keyword id="KW-0963">Cytoplasm</keyword>
<keyword id="KW-0378">Hydrolase</keyword>
<keyword id="KW-0479">Metal-binding</keyword>
<keyword id="KW-0547">Nucleotide-binding</keyword>
<evidence type="ECO:0000255" key="1">
    <source>
        <dbReference type="HAMAP-Rule" id="MF_00060"/>
    </source>
</evidence>
<reference key="1">
    <citation type="submission" date="2008-02" db="EMBL/GenBank/DDBJ databases">
        <title>Complete sequence of Pseudomonas putida W619.</title>
        <authorList>
            <person name="Copeland A."/>
            <person name="Lucas S."/>
            <person name="Lapidus A."/>
            <person name="Barry K."/>
            <person name="Detter J.C."/>
            <person name="Glavina del Rio T."/>
            <person name="Dalin E."/>
            <person name="Tice H."/>
            <person name="Pitluck S."/>
            <person name="Chain P."/>
            <person name="Malfatti S."/>
            <person name="Shin M."/>
            <person name="Vergez L."/>
            <person name="Schmutz J."/>
            <person name="Larimer F."/>
            <person name="Land M."/>
            <person name="Hauser L."/>
            <person name="Kyrpides N."/>
            <person name="Kim E."/>
            <person name="Taghavi S."/>
            <person name="Vangronsveld D."/>
            <person name="van der Lelie D."/>
            <person name="Richardson P."/>
        </authorList>
    </citation>
    <scope>NUCLEOTIDE SEQUENCE [LARGE SCALE GENOMIC DNA]</scope>
    <source>
        <strain>W619</strain>
    </source>
</reference>
<protein>
    <recommendedName>
        <fullName evidence="1">5'-nucleotidase SurE</fullName>
        <ecNumber evidence="1">3.1.3.5</ecNumber>
    </recommendedName>
    <alternativeName>
        <fullName evidence="1">Nucleoside 5'-monophosphate phosphohydrolase</fullName>
    </alternativeName>
</protein>
<sequence>MRILISNDDGVTAPGLAALHGALVDYAECVVIAPDQDKSGAGSSLTLDRPLHPQTLANGFISLNGTPTDCVHLGLNGLLPETPDMVVSGINLGANLGDDVIYSGTVAAALEGRFLGGTSLAFSLLSRLPDNLPSAAFIARRLVEAQSRLELPPRTVLNVNIPNLPLEHIRGIQVTRLGHRARAAAPTKVVNPRGKEGYWIAVAGDAEDGGPGTDFHAVMQGYVSITPLQLDRTFNDAFEQLHGWLEGVL</sequence>
<comment type="function">
    <text evidence="1">Nucleotidase that shows phosphatase activity on nucleoside 5'-monophosphates.</text>
</comment>
<comment type="catalytic activity">
    <reaction evidence="1">
        <text>a ribonucleoside 5'-phosphate + H2O = a ribonucleoside + phosphate</text>
        <dbReference type="Rhea" id="RHEA:12484"/>
        <dbReference type="ChEBI" id="CHEBI:15377"/>
        <dbReference type="ChEBI" id="CHEBI:18254"/>
        <dbReference type="ChEBI" id="CHEBI:43474"/>
        <dbReference type="ChEBI" id="CHEBI:58043"/>
        <dbReference type="EC" id="3.1.3.5"/>
    </reaction>
</comment>
<comment type="cofactor">
    <cofactor evidence="1">
        <name>a divalent metal cation</name>
        <dbReference type="ChEBI" id="CHEBI:60240"/>
    </cofactor>
    <text evidence="1">Binds 1 divalent metal cation per subunit.</text>
</comment>
<comment type="subcellular location">
    <subcellularLocation>
        <location evidence="1">Cytoplasm</location>
    </subcellularLocation>
</comment>
<comment type="similarity">
    <text evidence="1">Belongs to the SurE nucleotidase family.</text>
</comment>
<gene>
    <name evidence="1" type="primary">surE</name>
    <name type="ordered locus">PputW619_4055</name>
</gene>
<name>SURE_PSEPW</name>